<dbReference type="EMBL" id="U18916">
    <property type="protein sequence ID" value="AAC03219.1"/>
    <property type="molecule type" value="Genomic_DNA"/>
</dbReference>
<dbReference type="EMBL" id="BK006939">
    <property type="protein sequence ID" value="DAA07781.1"/>
    <property type="molecule type" value="Genomic_DNA"/>
</dbReference>
<dbReference type="PIR" id="S50624">
    <property type="entry name" value="S50624"/>
</dbReference>
<dbReference type="RefSeq" id="NP_011047.3">
    <property type="nucleotide sequence ID" value="NM_001179011.3"/>
</dbReference>
<dbReference type="BioGRID" id="300953">
    <property type="interactions" value="24"/>
</dbReference>
<dbReference type="DIP" id="DIP-4878N"/>
<dbReference type="FunCoup" id="P40076">
    <property type="interactions" value="28"/>
</dbReference>
<dbReference type="IntAct" id="P40076">
    <property type="interactions" value="2"/>
</dbReference>
<dbReference type="MINT" id="P40076"/>
<dbReference type="STRING" id="4932.YER121W"/>
<dbReference type="PaxDb" id="4932-YER121W"/>
<dbReference type="PeptideAtlas" id="P40076"/>
<dbReference type="EnsemblFungi" id="YER121W_mRNA">
    <property type="protein sequence ID" value="YER121W"/>
    <property type="gene ID" value="YER121W"/>
</dbReference>
<dbReference type="GeneID" id="856858"/>
<dbReference type="KEGG" id="sce:YER121W"/>
<dbReference type="AGR" id="SGD:S000000923"/>
<dbReference type="SGD" id="S000000923">
    <property type="gene designation" value="YER121W"/>
</dbReference>
<dbReference type="VEuPathDB" id="FungiDB:YER121W"/>
<dbReference type="HOGENOM" id="CLU_2229692_0_0_1"/>
<dbReference type="InParanoid" id="P40076"/>
<dbReference type="OMA" id="HYYALAX"/>
<dbReference type="OrthoDB" id="4050897at2759"/>
<dbReference type="BioCyc" id="YEAST:G3O-30285-MONOMER"/>
<dbReference type="BioGRID-ORCS" id="856858">
    <property type="hits" value="1 hit in 10 CRISPR screens"/>
</dbReference>
<dbReference type="PRO" id="PR:P40076"/>
<dbReference type="Proteomes" id="UP000002311">
    <property type="component" value="Chromosome V"/>
</dbReference>
<dbReference type="RNAct" id="P40076">
    <property type="molecule type" value="protein"/>
</dbReference>
<keyword id="KW-1185">Reference proteome</keyword>
<organism>
    <name type="scientific">Saccharomyces cerevisiae (strain ATCC 204508 / S288c)</name>
    <name type="common">Baker's yeast</name>
    <dbReference type="NCBI Taxonomy" id="559292"/>
    <lineage>
        <taxon>Eukaryota</taxon>
        <taxon>Fungi</taxon>
        <taxon>Dikarya</taxon>
        <taxon>Ascomycota</taxon>
        <taxon>Saccharomycotina</taxon>
        <taxon>Saccharomycetes</taxon>
        <taxon>Saccharomycetales</taxon>
        <taxon>Saccharomycetaceae</taxon>
        <taxon>Saccharomyces</taxon>
    </lineage>
</organism>
<reference key="1">
    <citation type="journal article" date="1997" name="Nature">
        <title>The nucleotide sequence of Saccharomyces cerevisiae chromosome V.</title>
        <authorList>
            <person name="Dietrich F.S."/>
            <person name="Mulligan J.T."/>
            <person name="Hennessy K.M."/>
            <person name="Yelton M.A."/>
            <person name="Allen E."/>
            <person name="Araujo R."/>
            <person name="Aviles E."/>
            <person name="Berno A."/>
            <person name="Brennan T."/>
            <person name="Carpenter J."/>
            <person name="Chen E."/>
            <person name="Cherry J.M."/>
            <person name="Chung E."/>
            <person name="Duncan M."/>
            <person name="Guzman E."/>
            <person name="Hartzell G."/>
            <person name="Hunicke-Smith S."/>
            <person name="Hyman R.W."/>
            <person name="Kayser A."/>
            <person name="Komp C."/>
            <person name="Lashkari D."/>
            <person name="Lew H."/>
            <person name="Lin D."/>
            <person name="Mosedale D."/>
            <person name="Nakahara K."/>
            <person name="Namath A."/>
            <person name="Norgren R."/>
            <person name="Oefner P."/>
            <person name="Oh C."/>
            <person name="Petel F.X."/>
            <person name="Roberts D."/>
            <person name="Sehl P."/>
            <person name="Schramm S."/>
            <person name="Shogren T."/>
            <person name="Smith V."/>
            <person name="Taylor P."/>
            <person name="Wei Y."/>
            <person name="Botstein D."/>
            <person name="Davis R.W."/>
        </authorList>
    </citation>
    <scope>NUCLEOTIDE SEQUENCE [LARGE SCALE GENOMIC DNA]</scope>
    <source>
        <strain>ATCC 204508 / S288c</strain>
    </source>
</reference>
<reference key="2">
    <citation type="journal article" date="2014" name="G3 (Bethesda)">
        <title>The reference genome sequence of Saccharomyces cerevisiae: Then and now.</title>
        <authorList>
            <person name="Engel S.R."/>
            <person name="Dietrich F.S."/>
            <person name="Fisk D.G."/>
            <person name="Binkley G."/>
            <person name="Balakrishnan R."/>
            <person name="Costanzo M.C."/>
            <person name="Dwight S.S."/>
            <person name="Hitz B.C."/>
            <person name="Karra K."/>
            <person name="Nash R.S."/>
            <person name="Weng S."/>
            <person name="Wong E.D."/>
            <person name="Lloyd P."/>
            <person name="Skrzypek M.S."/>
            <person name="Miyasato S.R."/>
            <person name="Simison M."/>
            <person name="Cherry J.M."/>
        </authorList>
    </citation>
    <scope>GENOME REANNOTATION</scope>
    <source>
        <strain>ATCC 204508 / S288c</strain>
    </source>
</reference>
<reference key="3">
    <citation type="journal article" date="2006" name="Yeast">
        <title>Annotation of unknown yeast ORFs by correlation analysis of microarray data and extensive literature searches.</title>
        <authorList>
            <person name="Pir P."/>
            <person name="Uelgen K.O."/>
            <person name="Hayes A."/>
            <person name="Ilsen Oensan Z."/>
            <person name="Kirdar B."/>
            <person name="Oliver S.G."/>
        </authorList>
    </citation>
    <scope>PREDICTION OF FUNCTION</scope>
</reference>
<name>YEV1_YEAST</name>
<accession>P40076</accession>
<accession>D3DM27</accession>
<feature type="chain" id="PRO_0000202646" description="Uncharacterized protein YER121W">
    <location>
        <begin position="1"/>
        <end position="114"/>
    </location>
</feature>
<feature type="region of interest" description="Disordered" evidence="1">
    <location>
        <begin position="1"/>
        <end position="22"/>
    </location>
</feature>
<feature type="compositionally biased region" description="Basic and acidic residues" evidence="1">
    <location>
        <begin position="1"/>
        <end position="20"/>
    </location>
</feature>
<comment type="function">
    <text>May be involved in phosphatase regulation and/or generation of precursor metabolites and energy.</text>
</comment>
<proteinExistence type="predicted"/>
<gene>
    <name type="ordered locus">YER121W</name>
</gene>
<sequence length="114" mass="12941">MGLSRWHDKNSRPAEEKSEEMQQDAHYYALAASDSLNASVSNEYGNQVMNSFWKVGIDSPYVDDEAIRNRDVENNLPSLKQSVYNANEPNATSSAFSTASYAHETFDFRNLKLR</sequence>
<evidence type="ECO:0000256" key="1">
    <source>
        <dbReference type="SAM" id="MobiDB-lite"/>
    </source>
</evidence>
<protein>
    <recommendedName>
        <fullName>Uncharacterized protein YER121W</fullName>
    </recommendedName>
</protein>